<proteinExistence type="evidence at transcript level"/>
<accession>Q5RDZ0</accession>
<feature type="chain" id="PRO_0000158924" description="GTP:AMP phosphotransferase AK3, mitochondrial">
    <location>
        <begin position="1"/>
        <end position="227"/>
    </location>
</feature>
<feature type="region of interest" description="NMP" evidence="4">
    <location>
        <begin position="37"/>
        <end position="66"/>
    </location>
</feature>
<feature type="region of interest" description="LID" evidence="4">
    <location>
        <begin position="127"/>
        <end position="164"/>
    </location>
</feature>
<feature type="binding site" evidence="2">
    <location>
        <position position="17"/>
    </location>
    <ligand>
        <name>GTP</name>
        <dbReference type="ChEBI" id="CHEBI:37565"/>
    </ligand>
</feature>
<feature type="binding site" evidence="2">
    <location>
        <position position="19"/>
    </location>
    <ligand>
        <name>GTP</name>
        <dbReference type="ChEBI" id="CHEBI:37565"/>
    </ligand>
</feature>
<feature type="binding site" evidence="2">
    <location>
        <position position="20"/>
    </location>
    <ligand>
        <name>GTP</name>
        <dbReference type="ChEBI" id="CHEBI:37565"/>
    </ligand>
</feature>
<feature type="binding site" evidence="2">
    <location>
        <position position="21"/>
    </location>
    <ligand>
        <name>GTP</name>
        <dbReference type="ChEBI" id="CHEBI:37565"/>
    </ligand>
</feature>
<feature type="binding site" evidence="2">
    <location>
        <position position="22"/>
    </location>
    <ligand>
        <name>GTP</name>
        <dbReference type="ChEBI" id="CHEBI:37565"/>
    </ligand>
</feature>
<feature type="binding site" evidence="2">
    <location>
        <position position="38"/>
    </location>
    <ligand>
        <name>AMP</name>
        <dbReference type="ChEBI" id="CHEBI:456215"/>
    </ligand>
</feature>
<feature type="binding site" evidence="2">
    <location>
        <position position="43"/>
    </location>
    <ligand>
        <name>AMP</name>
        <dbReference type="ChEBI" id="CHEBI:456215"/>
    </ligand>
</feature>
<feature type="binding site" evidence="2">
    <location>
        <position position="64"/>
    </location>
    <ligand>
        <name>AMP</name>
        <dbReference type="ChEBI" id="CHEBI:456215"/>
    </ligand>
</feature>
<feature type="binding site" evidence="2">
    <location>
        <position position="91"/>
    </location>
    <ligand>
        <name>AMP</name>
        <dbReference type="ChEBI" id="CHEBI:456215"/>
    </ligand>
</feature>
<feature type="binding site" evidence="1">
    <location>
        <position position="94"/>
    </location>
    <ligand>
        <name>AMP</name>
        <dbReference type="ChEBI" id="CHEBI:456215"/>
    </ligand>
</feature>
<feature type="binding site" evidence="2">
    <location>
        <position position="98"/>
    </location>
    <ligand>
        <name>AMP</name>
        <dbReference type="ChEBI" id="CHEBI:456215"/>
    </ligand>
</feature>
<feature type="binding site" evidence="2">
    <location>
        <position position="128"/>
    </location>
    <ligand>
        <name>GTP</name>
        <dbReference type="ChEBI" id="CHEBI:37565"/>
    </ligand>
</feature>
<feature type="binding site" evidence="2">
    <location>
        <position position="138"/>
    </location>
    <ligand>
        <name>GTP</name>
        <dbReference type="ChEBI" id="CHEBI:37565"/>
    </ligand>
</feature>
<feature type="binding site" evidence="2">
    <location>
        <position position="139"/>
    </location>
    <ligand>
        <name>GTP</name>
        <dbReference type="ChEBI" id="CHEBI:37565"/>
    </ligand>
</feature>
<feature type="binding site" evidence="2">
    <location>
        <position position="161"/>
    </location>
    <ligand>
        <name>GTP</name>
        <dbReference type="ChEBI" id="CHEBI:37565"/>
    </ligand>
</feature>
<feature type="binding site" evidence="2">
    <location>
        <position position="172"/>
    </location>
    <ligand>
        <name>GTP</name>
        <dbReference type="ChEBI" id="CHEBI:37565"/>
    </ligand>
</feature>
<feature type="binding site" evidence="2">
    <location>
        <position position="201"/>
    </location>
    <ligand>
        <name>GTP</name>
        <dbReference type="ChEBI" id="CHEBI:37565"/>
    </ligand>
</feature>
<feature type="modified residue" description="N6-succinyllysine" evidence="3">
    <location>
        <position position="20"/>
    </location>
</feature>
<feature type="modified residue" description="N6-acetyllysine" evidence="3">
    <location>
        <position position="34"/>
    </location>
</feature>
<feature type="modified residue" description="Phosphoserine" evidence="3">
    <location>
        <position position="37"/>
    </location>
</feature>
<feature type="modified residue" description="N6-succinyllysine" evidence="3">
    <location>
        <position position="57"/>
    </location>
</feature>
<feature type="modified residue" description="N6-acetyllysine; alternate" evidence="3">
    <location>
        <position position="64"/>
    </location>
</feature>
<feature type="modified residue" description="N6-succinyllysine; alternate" evidence="3">
    <location>
        <position position="64"/>
    </location>
</feature>
<feature type="modified residue" description="N6-acetyllysine; alternate" evidence="3">
    <location>
        <position position="80"/>
    </location>
</feature>
<feature type="modified residue" description="N6-succinyllysine; alternate" evidence="3">
    <location>
        <position position="80"/>
    </location>
</feature>
<feature type="modified residue" description="N6-acetyllysine; alternate" evidence="3">
    <location>
        <position position="174"/>
    </location>
</feature>
<feature type="modified residue" description="N6-succinyllysine; alternate" evidence="3">
    <location>
        <position position="174"/>
    </location>
</feature>
<feature type="modified residue" description="N6-acetyllysine; alternate" evidence="3">
    <location>
        <position position="189"/>
    </location>
</feature>
<feature type="modified residue" description="N6-succinyllysine; alternate" evidence="3">
    <location>
        <position position="189"/>
    </location>
</feature>
<feature type="modified residue" description="N6-acetyllysine" evidence="3">
    <location>
        <position position="203"/>
    </location>
</feature>
<organism>
    <name type="scientific">Pongo abelii</name>
    <name type="common">Sumatran orangutan</name>
    <name type="synonym">Pongo pygmaeus abelii</name>
    <dbReference type="NCBI Taxonomy" id="9601"/>
    <lineage>
        <taxon>Eukaryota</taxon>
        <taxon>Metazoa</taxon>
        <taxon>Chordata</taxon>
        <taxon>Craniata</taxon>
        <taxon>Vertebrata</taxon>
        <taxon>Euteleostomi</taxon>
        <taxon>Mammalia</taxon>
        <taxon>Eutheria</taxon>
        <taxon>Euarchontoglires</taxon>
        <taxon>Primates</taxon>
        <taxon>Haplorrhini</taxon>
        <taxon>Catarrhini</taxon>
        <taxon>Hominidae</taxon>
        <taxon>Pongo</taxon>
    </lineage>
</organism>
<dbReference type="EC" id="2.7.4.10" evidence="2"/>
<dbReference type="EMBL" id="CR857751">
    <property type="protein sequence ID" value="CAH90017.1"/>
    <property type="molecule type" value="mRNA"/>
</dbReference>
<dbReference type="RefSeq" id="NP_001127224.1">
    <property type="nucleotide sequence ID" value="NM_001133752.1"/>
</dbReference>
<dbReference type="SMR" id="Q5RDZ0"/>
<dbReference type="FunCoup" id="Q5RDZ0">
    <property type="interactions" value="1238"/>
</dbReference>
<dbReference type="STRING" id="9601.ENSPPYP00000021553"/>
<dbReference type="GeneID" id="100174279"/>
<dbReference type="KEGG" id="pon:100174279"/>
<dbReference type="CTD" id="50808"/>
<dbReference type="eggNOG" id="KOG3078">
    <property type="taxonomic scope" value="Eukaryota"/>
</dbReference>
<dbReference type="InParanoid" id="Q5RDZ0"/>
<dbReference type="OrthoDB" id="439792at2759"/>
<dbReference type="Proteomes" id="UP000001595">
    <property type="component" value="Unplaced"/>
</dbReference>
<dbReference type="GO" id="GO:0005759">
    <property type="term" value="C:mitochondrial matrix"/>
    <property type="evidence" value="ECO:0007669"/>
    <property type="project" value="UniProtKB-SubCell"/>
</dbReference>
<dbReference type="GO" id="GO:0004017">
    <property type="term" value="F:adenylate kinase activity"/>
    <property type="evidence" value="ECO:0007669"/>
    <property type="project" value="InterPro"/>
</dbReference>
<dbReference type="GO" id="GO:0005524">
    <property type="term" value="F:ATP binding"/>
    <property type="evidence" value="ECO:0007669"/>
    <property type="project" value="InterPro"/>
</dbReference>
<dbReference type="GO" id="GO:0005525">
    <property type="term" value="F:GTP binding"/>
    <property type="evidence" value="ECO:0007669"/>
    <property type="project" value="UniProtKB-KW"/>
</dbReference>
<dbReference type="GO" id="GO:0046899">
    <property type="term" value="F:nucleoside triphosphate adenylate kinase activity"/>
    <property type="evidence" value="ECO:0007669"/>
    <property type="project" value="UniProtKB-UniRule"/>
</dbReference>
<dbReference type="GO" id="GO:0006172">
    <property type="term" value="P:ADP biosynthetic process"/>
    <property type="evidence" value="ECO:0007669"/>
    <property type="project" value="UniProtKB-UniRule"/>
</dbReference>
<dbReference type="GO" id="GO:0046033">
    <property type="term" value="P:AMP metabolic process"/>
    <property type="evidence" value="ECO:0007669"/>
    <property type="project" value="UniProtKB-UniRule"/>
</dbReference>
<dbReference type="GO" id="GO:0046039">
    <property type="term" value="P:GTP metabolic process"/>
    <property type="evidence" value="ECO:0007669"/>
    <property type="project" value="UniProtKB-UniRule"/>
</dbReference>
<dbReference type="GO" id="GO:0046041">
    <property type="term" value="P:ITP metabolic process"/>
    <property type="evidence" value="ECO:0007669"/>
    <property type="project" value="UniProtKB-UniRule"/>
</dbReference>
<dbReference type="CDD" id="cd01428">
    <property type="entry name" value="ADK"/>
    <property type="match status" value="1"/>
</dbReference>
<dbReference type="FunFam" id="3.40.50.300:FF:000106">
    <property type="entry name" value="Adenylate kinase mitochondrial"/>
    <property type="match status" value="1"/>
</dbReference>
<dbReference type="Gene3D" id="3.40.50.300">
    <property type="entry name" value="P-loop containing nucleotide triphosphate hydrolases"/>
    <property type="match status" value="1"/>
</dbReference>
<dbReference type="HAMAP" id="MF_00235">
    <property type="entry name" value="Adenylate_kinase_Adk"/>
    <property type="match status" value="1"/>
</dbReference>
<dbReference type="HAMAP" id="MF_03169">
    <property type="entry name" value="Adenylate_kinase_AK3"/>
    <property type="match status" value="1"/>
</dbReference>
<dbReference type="InterPro" id="IPR006259">
    <property type="entry name" value="Adenyl_kin_sub"/>
</dbReference>
<dbReference type="InterPro" id="IPR000850">
    <property type="entry name" value="Adenylat/UMP-CMP_kin"/>
</dbReference>
<dbReference type="InterPro" id="IPR033690">
    <property type="entry name" value="Adenylat_kinase_CS"/>
</dbReference>
<dbReference type="InterPro" id="IPR007862">
    <property type="entry name" value="Adenylate_kinase_lid-dom"/>
</dbReference>
<dbReference type="InterPro" id="IPR036193">
    <property type="entry name" value="ADK_active_lid_dom_sf"/>
</dbReference>
<dbReference type="InterPro" id="IPR028586">
    <property type="entry name" value="AK3/Ak4_mitochondrial"/>
</dbReference>
<dbReference type="InterPro" id="IPR027417">
    <property type="entry name" value="P-loop_NTPase"/>
</dbReference>
<dbReference type="NCBIfam" id="TIGR01351">
    <property type="entry name" value="adk"/>
    <property type="match status" value="1"/>
</dbReference>
<dbReference type="PANTHER" id="PTHR23359">
    <property type="entry name" value="NUCLEOTIDE KINASE"/>
    <property type="match status" value="1"/>
</dbReference>
<dbReference type="Pfam" id="PF00406">
    <property type="entry name" value="ADK"/>
    <property type="match status" value="1"/>
</dbReference>
<dbReference type="Pfam" id="PF05191">
    <property type="entry name" value="ADK_lid"/>
    <property type="match status" value="1"/>
</dbReference>
<dbReference type="PRINTS" id="PR00094">
    <property type="entry name" value="ADENYLTKNASE"/>
</dbReference>
<dbReference type="SUPFAM" id="SSF57774">
    <property type="entry name" value="Microbial and mitochondrial ADK, insert 'zinc finger' domain"/>
    <property type="match status" value="1"/>
</dbReference>
<dbReference type="SUPFAM" id="SSF52540">
    <property type="entry name" value="P-loop containing nucleoside triphosphate hydrolases"/>
    <property type="match status" value="1"/>
</dbReference>
<dbReference type="PROSITE" id="PS00113">
    <property type="entry name" value="ADENYLATE_KINASE"/>
    <property type="match status" value="1"/>
</dbReference>
<sequence length="227" mass="25496">MGASARLLRAVIMGAPGSGKGTVSSRITTHFELKHLSSGDLLRDNMLRGTEIGVLAKAFIDQGKLIPDDVMTRLALHELKNLTQYSWLLDGFPRTLPQAEALDRAYQIDTVINLNVPFEVIKQRLTARWIHPASGRVYNIEFNPPKTVGIDDLTGEPLIQREDDKPETVIKRLKAYEDQTKPVLEYYQKKGVLETFSGTETNKVWPYVYAFLQTKVPQTSQKASVTP</sequence>
<name>KAD3_PONAB</name>
<protein>
    <recommendedName>
        <fullName evidence="2">GTP:AMP phosphotransferase AK3, mitochondrial</fullName>
        <ecNumber evidence="2">2.7.4.10</ecNumber>
    </recommendedName>
    <alternativeName>
        <fullName evidence="2">Adenylate kinase 3</fullName>
    </alternativeName>
</protein>
<gene>
    <name evidence="2" type="primary">AK3</name>
</gene>
<comment type="function">
    <text evidence="2">Mitochondrial adenylate kinase with a specific GTP:AMP phosphotransferase activity. Could also use ITP as phosphate donor. Its physiological function is to recycle GTP into GDP which is necessary for the TCA cycle in the mitochondrial matrix.</text>
</comment>
<comment type="catalytic activity">
    <reaction evidence="2 4">
        <text>a ribonucleoside 5'-triphosphate + AMP = a ribonucleoside 5'-diphosphate + ADP</text>
        <dbReference type="Rhea" id="RHEA:13749"/>
        <dbReference type="ChEBI" id="CHEBI:57930"/>
        <dbReference type="ChEBI" id="CHEBI:61557"/>
        <dbReference type="ChEBI" id="CHEBI:456215"/>
        <dbReference type="ChEBI" id="CHEBI:456216"/>
        <dbReference type="EC" id="2.7.4.10"/>
    </reaction>
</comment>
<comment type="catalytic activity">
    <reaction evidence="2">
        <text>GTP + AMP = GDP + ADP</text>
        <dbReference type="Rhea" id="RHEA:29863"/>
        <dbReference type="ChEBI" id="CHEBI:37565"/>
        <dbReference type="ChEBI" id="CHEBI:58189"/>
        <dbReference type="ChEBI" id="CHEBI:456215"/>
        <dbReference type="ChEBI" id="CHEBI:456216"/>
    </reaction>
</comment>
<comment type="catalytic activity">
    <reaction evidence="2">
        <text>ITP + AMP = IDP + ADP</text>
        <dbReference type="Rhea" id="RHEA:29867"/>
        <dbReference type="ChEBI" id="CHEBI:58280"/>
        <dbReference type="ChEBI" id="CHEBI:61402"/>
        <dbReference type="ChEBI" id="CHEBI:456215"/>
        <dbReference type="ChEBI" id="CHEBI:456216"/>
    </reaction>
</comment>
<comment type="subunit">
    <text evidence="2 4">Monomer.</text>
</comment>
<comment type="subcellular location">
    <subcellularLocation>
        <location evidence="2 4">Mitochondrion matrix</location>
    </subcellularLocation>
</comment>
<comment type="domain">
    <text evidence="2 4">Consists of three domains, a large central CORE domain and two small peripheral domains, NMPbind and LID, which undergo movements during catalysis. The LID domain closes over the site of phosphoryl transfer upon GTP binding. Assembling and dissambling the active center during each catalytic cycle provides an effective means to prevent GTP hydrolysis.</text>
</comment>
<comment type="similarity">
    <text evidence="4">Belongs to the adenylate kinase family. AK3 subfamily.</text>
</comment>
<keyword id="KW-0007">Acetylation</keyword>
<keyword id="KW-0342">GTP-binding</keyword>
<keyword id="KW-0418">Kinase</keyword>
<keyword id="KW-0496">Mitochondrion</keyword>
<keyword id="KW-0547">Nucleotide-binding</keyword>
<keyword id="KW-0597">Phosphoprotein</keyword>
<keyword id="KW-1185">Reference proteome</keyword>
<keyword id="KW-0808">Transferase</keyword>
<evidence type="ECO:0000250" key="1">
    <source>
        <dbReference type="UniProtKB" id="P08760"/>
    </source>
</evidence>
<evidence type="ECO:0000250" key="2">
    <source>
        <dbReference type="UniProtKB" id="Q9UIJ7"/>
    </source>
</evidence>
<evidence type="ECO:0000250" key="3">
    <source>
        <dbReference type="UniProtKB" id="Q9WTP7"/>
    </source>
</evidence>
<evidence type="ECO:0000255" key="4">
    <source>
        <dbReference type="HAMAP-Rule" id="MF_03169"/>
    </source>
</evidence>
<reference key="1">
    <citation type="submission" date="2004-11" db="EMBL/GenBank/DDBJ databases">
        <authorList>
            <consortium name="The German cDNA consortium"/>
        </authorList>
    </citation>
    <scope>NUCLEOTIDE SEQUENCE [LARGE SCALE MRNA]</scope>
    <source>
        <tissue>Kidney</tissue>
    </source>
</reference>